<evidence type="ECO:0000255" key="1">
    <source>
        <dbReference type="HAMAP-Rule" id="MF_00129"/>
    </source>
</evidence>
<name>MNMG_CALS8</name>
<dbReference type="EMBL" id="CP000679">
    <property type="protein sequence ID" value="ABP68335.1"/>
    <property type="molecule type" value="Genomic_DNA"/>
</dbReference>
<dbReference type="RefSeq" id="WP_011918252.1">
    <property type="nucleotide sequence ID" value="NC_009437.1"/>
</dbReference>
<dbReference type="SMR" id="A4XN50"/>
<dbReference type="STRING" id="351627.Csac_2770"/>
<dbReference type="KEGG" id="csc:Csac_2770"/>
<dbReference type="eggNOG" id="COG0445">
    <property type="taxonomic scope" value="Bacteria"/>
</dbReference>
<dbReference type="HOGENOM" id="CLU_007831_2_2_9"/>
<dbReference type="OrthoDB" id="9815560at2"/>
<dbReference type="Proteomes" id="UP000000256">
    <property type="component" value="Chromosome"/>
</dbReference>
<dbReference type="GO" id="GO:0005829">
    <property type="term" value="C:cytosol"/>
    <property type="evidence" value="ECO:0007669"/>
    <property type="project" value="TreeGrafter"/>
</dbReference>
<dbReference type="GO" id="GO:0050660">
    <property type="term" value="F:flavin adenine dinucleotide binding"/>
    <property type="evidence" value="ECO:0007669"/>
    <property type="project" value="UniProtKB-UniRule"/>
</dbReference>
<dbReference type="GO" id="GO:0030488">
    <property type="term" value="P:tRNA methylation"/>
    <property type="evidence" value="ECO:0007669"/>
    <property type="project" value="TreeGrafter"/>
</dbReference>
<dbReference type="GO" id="GO:0002098">
    <property type="term" value="P:tRNA wobble uridine modification"/>
    <property type="evidence" value="ECO:0007669"/>
    <property type="project" value="InterPro"/>
</dbReference>
<dbReference type="FunFam" id="1.10.10.1800:FF:000001">
    <property type="entry name" value="tRNA uridine 5-carboxymethylaminomethyl modification enzyme MnmG"/>
    <property type="match status" value="1"/>
</dbReference>
<dbReference type="FunFam" id="1.10.150.570:FF:000001">
    <property type="entry name" value="tRNA uridine 5-carboxymethylaminomethyl modification enzyme MnmG"/>
    <property type="match status" value="1"/>
</dbReference>
<dbReference type="FunFam" id="3.50.50.60:FF:000002">
    <property type="entry name" value="tRNA uridine 5-carboxymethylaminomethyl modification enzyme MnmG"/>
    <property type="match status" value="1"/>
</dbReference>
<dbReference type="Gene3D" id="3.50.50.60">
    <property type="entry name" value="FAD/NAD(P)-binding domain"/>
    <property type="match status" value="2"/>
</dbReference>
<dbReference type="Gene3D" id="1.10.150.570">
    <property type="entry name" value="GidA associated domain, C-terminal subdomain"/>
    <property type="match status" value="1"/>
</dbReference>
<dbReference type="Gene3D" id="1.10.10.1800">
    <property type="entry name" value="tRNA uridine 5-carboxymethylaminomethyl modification enzyme MnmG/GidA"/>
    <property type="match status" value="1"/>
</dbReference>
<dbReference type="HAMAP" id="MF_00129">
    <property type="entry name" value="MnmG_GidA"/>
    <property type="match status" value="1"/>
</dbReference>
<dbReference type="InterPro" id="IPR036188">
    <property type="entry name" value="FAD/NAD-bd_sf"/>
</dbReference>
<dbReference type="InterPro" id="IPR049312">
    <property type="entry name" value="GIDA_C_N"/>
</dbReference>
<dbReference type="InterPro" id="IPR004416">
    <property type="entry name" value="MnmG"/>
</dbReference>
<dbReference type="InterPro" id="IPR002218">
    <property type="entry name" value="MnmG-rel"/>
</dbReference>
<dbReference type="InterPro" id="IPR020595">
    <property type="entry name" value="MnmG-rel_CS"/>
</dbReference>
<dbReference type="InterPro" id="IPR026904">
    <property type="entry name" value="MnmG_C"/>
</dbReference>
<dbReference type="InterPro" id="IPR047001">
    <property type="entry name" value="MnmG_C_subdom"/>
</dbReference>
<dbReference type="InterPro" id="IPR044920">
    <property type="entry name" value="MnmG_C_subdom_sf"/>
</dbReference>
<dbReference type="InterPro" id="IPR040131">
    <property type="entry name" value="MnmG_N"/>
</dbReference>
<dbReference type="NCBIfam" id="TIGR00136">
    <property type="entry name" value="mnmG_gidA"/>
    <property type="match status" value="1"/>
</dbReference>
<dbReference type="PANTHER" id="PTHR11806">
    <property type="entry name" value="GLUCOSE INHIBITED DIVISION PROTEIN A"/>
    <property type="match status" value="1"/>
</dbReference>
<dbReference type="PANTHER" id="PTHR11806:SF0">
    <property type="entry name" value="PROTEIN MTO1 HOMOLOG, MITOCHONDRIAL"/>
    <property type="match status" value="1"/>
</dbReference>
<dbReference type="Pfam" id="PF01134">
    <property type="entry name" value="GIDA"/>
    <property type="match status" value="1"/>
</dbReference>
<dbReference type="Pfam" id="PF21680">
    <property type="entry name" value="GIDA_C_1st"/>
    <property type="match status" value="1"/>
</dbReference>
<dbReference type="Pfam" id="PF13932">
    <property type="entry name" value="SAM_GIDA_C"/>
    <property type="match status" value="1"/>
</dbReference>
<dbReference type="PRINTS" id="PR00411">
    <property type="entry name" value="PNDRDTASEI"/>
</dbReference>
<dbReference type="SMART" id="SM01228">
    <property type="entry name" value="GIDA_assoc_3"/>
    <property type="match status" value="1"/>
</dbReference>
<dbReference type="SUPFAM" id="SSF51905">
    <property type="entry name" value="FAD/NAD(P)-binding domain"/>
    <property type="match status" value="1"/>
</dbReference>
<dbReference type="PROSITE" id="PS01280">
    <property type="entry name" value="GIDA_1"/>
    <property type="match status" value="1"/>
</dbReference>
<dbReference type="PROSITE" id="PS01281">
    <property type="entry name" value="GIDA_2"/>
    <property type="match status" value="1"/>
</dbReference>
<comment type="function">
    <text evidence="1">NAD-binding protein involved in the addition of a carboxymethylaminomethyl (cmnm) group at the wobble position (U34) of certain tRNAs, forming tRNA-cmnm(5)s(2)U34.</text>
</comment>
<comment type="cofactor">
    <cofactor evidence="1">
        <name>FAD</name>
        <dbReference type="ChEBI" id="CHEBI:57692"/>
    </cofactor>
</comment>
<comment type="subunit">
    <text evidence="1">Homodimer. Heterotetramer of two MnmE and two MnmG subunits.</text>
</comment>
<comment type="subcellular location">
    <subcellularLocation>
        <location evidence="1">Cytoplasm</location>
    </subcellularLocation>
</comment>
<comment type="similarity">
    <text evidence="1">Belongs to the MnmG family.</text>
</comment>
<organism>
    <name type="scientific">Caldicellulosiruptor saccharolyticus (strain ATCC 43494 / DSM 8903 / Tp8T 6331)</name>
    <dbReference type="NCBI Taxonomy" id="351627"/>
    <lineage>
        <taxon>Bacteria</taxon>
        <taxon>Bacillati</taxon>
        <taxon>Bacillota</taxon>
        <taxon>Bacillota incertae sedis</taxon>
        <taxon>Caldicellulosiruptorales</taxon>
        <taxon>Caldicellulosiruptoraceae</taxon>
        <taxon>Caldicellulosiruptor</taxon>
    </lineage>
</organism>
<accession>A4XN50</accession>
<protein>
    <recommendedName>
        <fullName evidence="1">tRNA uridine 5-carboxymethylaminomethyl modification enzyme MnmG</fullName>
    </recommendedName>
    <alternativeName>
        <fullName evidence="1">Glucose-inhibited division protein A</fullName>
    </alternativeName>
</protein>
<proteinExistence type="inferred from homology"/>
<reference key="1">
    <citation type="submission" date="2007-04" db="EMBL/GenBank/DDBJ databases">
        <title>Genome sequence of the thermophilic hydrogen-producing bacterium Caldicellulosiruptor saccharolyticus DSM 8903.</title>
        <authorList>
            <person name="Copeland A."/>
            <person name="Lucas S."/>
            <person name="Lapidus A."/>
            <person name="Barry K."/>
            <person name="Detter J.C."/>
            <person name="Glavina del Rio T."/>
            <person name="Hammon N."/>
            <person name="Israni S."/>
            <person name="Dalin E."/>
            <person name="Tice H."/>
            <person name="Pitluck S."/>
            <person name="Kiss H."/>
            <person name="Brettin T."/>
            <person name="Bruce D."/>
            <person name="Han C."/>
            <person name="Schmutz J."/>
            <person name="Larimer F."/>
            <person name="Land M."/>
            <person name="Hauser L."/>
            <person name="Kyrpides N."/>
            <person name="Lykidis A."/>
            <person name="van de Werken H.J.G."/>
            <person name="Verhaart M.R.A."/>
            <person name="VanFossen A.L."/>
            <person name="Lewis D.L."/>
            <person name="Nichols J.D."/>
            <person name="Goorissen H.P."/>
            <person name="van Niel E.W.J."/>
            <person name="Stams F.J.M."/>
            <person name="Willquist K.U."/>
            <person name="Ward D.E."/>
            <person name="van der Oost J."/>
            <person name="Kelly R.M."/>
            <person name="Kengen S.M.W."/>
            <person name="Richardson P."/>
        </authorList>
    </citation>
    <scope>NUCLEOTIDE SEQUENCE [LARGE SCALE GENOMIC DNA]</scope>
    <source>
        <strain>ATCC 43494 / DSM 8903 / Tp8T 6331</strain>
    </source>
</reference>
<sequence length="626" mass="69893">MEFVAGEYDIVVVGAGHAGCEAALACARLGLKTIVFAINLDSIGNMPCNPSIGGTGKGHLVREIDALGGEMGKAADATAIQVRILNRAKGPAVYSLRAQCDRARYKLYMKRVLESQPNLDIRQGEVCDILVEDGKVTGVKLTTGAIFRAKAVVLATGTFLGGRIIIGETVYDGGPDGMHPAKYLTESLKKLGIEMMRFKTGTPARVHRRSLDFSKMQIQLGDEVITPFSFEHETLEIEQVPCYLTYTTEETHRIIRENLHRAPLFTGLIQGVGPRYCPSIEDKVVRFADKPRHQVFIEPMGRDTEEMYVQGMSSSLPEDVQIKMYRSVIGLENVQIMRPAYAIEYDCINPLQLEATLQFKKIKGLFSAGQINGTSGYEEAAAQGIIAGINAAMYVKGKEMLVLDRSQAYIGVLIDDLVTKGTNEPYRIMTSRAEYRLILRQDNADLRLTEIGYRIGLISQERYEKFLKKKKMIEDEIERLKKTVIAPSDKVNKFLIEHGSSPISTGVKLSELLKRPELSYEALREIDPQRPDLPRSVKEEVEIEIKYEGYIKKQLQQIEQFKKLENKKIPEWVDYNQISGLSTEAKQKLSQIRPASIGQASRISGVSPADISVLLIWLEQAKKGSK</sequence>
<feature type="chain" id="PRO_1000016573" description="tRNA uridine 5-carboxymethylaminomethyl modification enzyme MnmG">
    <location>
        <begin position="1"/>
        <end position="626"/>
    </location>
</feature>
<feature type="binding site" evidence="1">
    <location>
        <begin position="14"/>
        <end position="19"/>
    </location>
    <ligand>
        <name>FAD</name>
        <dbReference type="ChEBI" id="CHEBI:57692"/>
    </ligand>
</feature>
<feature type="binding site" evidence="1">
    <location>
        <begin position="273"/>
        <end position="287"/>
    </location>
    <ligand>
        <name>NAD(+)</name>
        <dbReference type="ChEBI" id="CHEBI:57540"/>
    </ligand>
</feature>
<gene>
    <name evidence="1" type="primary">mnmG</name>
    <name evidence="1" type="synonym">gidA</name>
    <name type="ordered locus">Csac_2770</name>
</gene>
<keyword id="KW-0963">Cytoplasm</keyword>
<keyword id="KW-0274">FAD</keyword>
<keyword id="KW-0285">Flavoprotein</keyword>
<keyword id="KW-0520">NAD</keyword>
<keyword id="KW-0819">tRNA processing</keyword>